<organism>
    <name type="scientific">Clostridium perfringens (strain ATCC 13124 / DSM 756 / JCM 1290 / NCIMB 6125 / NCTC 8237 / Type A)</name>
    <dbReference type="NCBI Taxonomy" id="195103"/>
    <lineage>
        <taxon>Bacteria</taxon>
        <taxon>Bacillati</taxon>
        <taxon>Bacillota</taxon>
        <taxon>Clostridia</taxon>
        <taxon>Eubacteriales</taxon>
        <taxon>Clostridiaceae</taxon>
        <taxon>Clostridium</taxon>
    </lineage>
</organism>
<name>RNZ_CLOP1</name>
<feature type="chain" id="PRO_1000070272" description="Ribonuclease Z">
    <location>
        <begin position="1"/>
        <end position="316"/>
    </location>
</feature>
<feature type="active site" description="Proton acceptor" evidence="1">
    <location>
        <position position="65"/>
    </location>
</feature>
<feature type="binding site" evidence="1">
    <location>
        <position position="61"/>
    </location>
    <ligand>
        <name>Zn(2+)</name>
        <dbReference type="ChEBI" id="CHEBI:29105"/>
        <label>1</label>
        <note>catalytic</note>
    </ligand>
</feature>
<feature type="binding site" evidence="1">
    <location>
        <position position="63"/>
    </location>
    <ligand>
        <name>Zn(2+)</name>
        <dbReference type="ChEBI" id="CHEBI:29105"/>
        <label>1</label>
        <note>catalytic</note>
    </ligand>
</feature>
<feature type="binding site" evidence="1">
    <location>
        <position position="65"/>
    </location>
    <ligand>
        <name>Zn(2+)</name>
        <dbReference type="ChEBI" id="CHEBI:29105"/>
        <label>2</label>
        <note>catalytic</note>
    </ligand>
</feature>
<feature type="binding site" evidence="1">
    <location>
        <position position="66"/>
    </location>
    <ligand>
        <name>Zn(2+)</name>
        <dbReference type="ChEBI" id="CHEBI:29105"/>
        <label>2</label>
        <note>catalytic</note>
    </ligand>
</feature>
<feature type="binding site" evidence="1">
    <location>
        <position position="152"/>
    </location>
    <ligand>
        <name>Zn(2+)</name>
        <dbReference type="ChEBI" id="CHEBI:29105"/>
        <label>1</label>
        <note>catalytic</note>
    </ligand>
</feature>
<feature type="binding site" evidence="1">
    <location>
        <position position="220"/>
    </location>
    <ligand>
        <name>Zn(2+)</name>
        <dbReference type="ChEBI" id="CHEBI:29105"/>
        <label>1</label>
        <note>catalytic</note>
    </ligand>
</feature>
<feature type="binding site" evidence="1">
    <location>
        <position position="220"/>
    </location>
    <ligand>
        <name>Zn(2+)</name>
        <dbReference type="ChEBI" id="CHEBI:29105"/>
        <label>2</label>
        <note>catalytic</note>
    </ligand>
</feature>
<feature type="binding site" evidence="1">
    <location>
        <position position="279"/>
    </location>
    <ligand>
        <name>Zn(2+)</name>
        <dbReference type="ChEBI" id="CHEBI:29105"/>
        <label>2</label>
        <note>catalytic</note>
    </ligand>
</feature>
<comment type="function">
    <text evidence="1">Zinc phosphodiesterase, which displays some tRNA 3'-processing endonuclease activity. Probably involved in tRNA maturation, by removing a 3'-trailer from precursor tRNA.</text>
</comment>
<comment type="catalytic activity">
    <reaction evidence="1">
        <text>Endonucleolytic cleavage of RNA, removing extra 3' nucleotides from tRNA precursor, generating 3' termini of tRNAs. A 3'-hydroxy group is left at the tRNA terminus and a 5'-phosphoryl group is left at the trailer molecule.</text>
        <dbReference type="EC" id="3.1.26.11"/>
    </reaction>
</comment>
<comment type="cofactor">
    <cofactor evidence="1">
        <name>Zn(2+)</name>
        <dbReference type="ChEBI" id="CHEBI:29105"/>
    </cofactor>
    <text evidence="1">Binds 2 Zn(2+) ions.</text>
</comment>
<comment type="subunit">
    <text evidence="1">Homodimer.</text>
</comment>
<comment type="similarity">
    <text evidence="1">Belongs to the RNase Z family.</text>
</comment>
<accession>Q0TQN4</accession>
<proteinExistence type="inferred from homology"/>
<protein>
    <recommendedName>
        <fullName evidence="1">Ribonuclease Z</fullName>
        <shortName evidence="1">RNase Z</shortName>
        <ecNumber evidence="1">3.1.26.11</ecNumber>
    </recommendedName>
    <alternativeName>
        <fullName evidence="1">tRNA 3 endonuclease</fullName>
    </alternativeName>
    <alternativeName>
        <fullName evidence="1">tRNase Z</fullName>
    </alternativeName>
</protein>
<dbReference type="EC" id="3.1.26.11" evidence="1"/>
<dbReference type="EMBL" id="CP000246">
    <property type="protein sequence ID" value="ABG83193.1"/>
    <property type="molecule type" value="Genomic_DNA"/>
</dbReference>
<dbReference type="RefSeq" id="WP_011590814.1">
    <property type="nucleotide sequence ID" value="NC_008261.1"/>
</dbReference>
<dbReference type="SMR" id="Q0TQN4"/>
<dbReference type="STRING" id="195103.CPF_1613"/>
<dbReference type="PaxDb" id="195103-CPF_1613"/>
<dbReference type="KEGG" id="cpf:CPF_1613"/>
<dbReference type="eggNOG" id="COG1234">
    <property type="taxonomic scope" value="Bacteria"/>
</dbReference>
<dbReference type="HOGENOM" id="CLU_031317_2_1_9"/>
<dbReference type="Proteomes" id="UP000001823">
    <property type="component" value="Chromosome"/>
</dbReference>
<dbReference type="GO" id="GO:0042781">
    <property type="term" value="F:3'-tRNA processing endoribonuclease activity"/>
    <property type="evidence" value="ECO:0007669"/>
    <property type="project" value="UniProtKB-UniRule"/>
</dbReference>
<dbReference type="GO" id="GO:0008270">
    <property type="term" value="F:zinc ion binding"/>
    <property type="evidence" value="ECO:0007669"/>
    <property type="project" value="UniProtKB-UniRule"/>
</dbReference>
<dbReference type="CDD" id="cd07717">
    <property type="entry name" value="RNaseZ_ZiPD-like_MBL-fold"/>
    <property type="match status" value="1"/>
</dbReference>
<dbReference type="Gene3D" id="3.60.15.10">
    <property type="entry name" value="Ribonuclease Z/Hydroxyacylglutathione hydrolase-like"/>
    <property type="match status" value="1"/>
</dbReference>
<dbReference type="HAMAP" id="MF_01818">
    <property type="entry name" value="RNase_Z_BN"/>
    <property type="match status" value="1"/>
</dbReference>
<dbReference type="InterPro" id="IPR001279">
    <property type="entry name" value="Metallo-B-lactamas"/>
</dbReference>
<dbReference type="InterPro" id="IPR036866">
    <property type="entry name" value="RibonucZ/Hydroxyglut_hydro"/>
</dbReference>
<dbReference type="InterPro" id="IPR013471">
    <property type="entry name" value="RNase_Z/BN"/>
</dbReference>
<dbReference type="NCBIfam" id="NF000801">
    <property type="entry name" value="PRK00055.1-3"/>
    <property type="match status" value="1"/>
</dbReference>
<dbReference type="NCBIfam" id="TIGR02651">
    <property type="entry name" value="RNase_Z"/>
    <property type="match status" value="1"/>
</dbReference>
<dbReference type="PANTHER" id="PTHR46018">
    <property type="entry name" value="ZINC PHOSPHODIESTERASE ELAC PROTEIN 1"/>
    <property type="match status" value="1"/>
</dbReference>
<dbReference type="PANTHER" id="PTHR46018:SF2">
    <property type="entry name" value="ZINC PHOSPHODIESTERASE ELAC PROTEIN 1"/>
    <property type="match status" value="1"/>
</dbReference>
<dbReference type="Pfam" id="PF00753">
    <property type="entry name" value="Lactamase_B"/>
    <property type="match status" value="1"/>
</dbReference>
<dbReference type="Pfam" id="PF12706">
    <property type="entry name" value="Lactamase_B_2"/>
    <property type="match status" value="1"/>
</dbReference>
<dbReference type="SUPFAM" id="SSF56281">
    <property type="entry name" value="Metallo-hydrolase/oxidoreductase"/>
    <property type="match status" value="1"/>
</dbReference>
<reference key="1">
    <citation type="journal article" date="2006" name="Genome Res.">
        <title>Skewed genomic variability in strains of the toxigenic bacterial pathogen, Clostridium perfringens.</title>
        <authorList>
            <person name="Myers G.S.A."/>
            <person name="Rasko D.A."/>
            <person name="Cheung J.K."/>
            <person name="Ravel J."/>
            <person name="Seshadri R."/>
            <person name="DeBoy R.T."/>
            <person name="Ren Q."/>
            <person name="Varga J."/>
            <person name="Awad M.M."/>
            <person name="Brinkac L.M."/>
            <person name="Daugherty S.C."/>
            <person name="Haft D.H."/>
            <person name="Dodson R.J."/>
            <person name="Madupu R."/>
            <person name="Nelson W.C."/>
            <person name="Rosovitz M.J."/>
            <person name="Sullivan S.A."/>
            <person name="Khouri H."/>
            <person name="Dimitrov G.I."/>
            <person name="Watkins K.L."/>
            <person name="Mulligan S."/>
            <person name="Benton J."/>
            <person name="Radune D."/>
            <person name="Fisher D.J."/>
            <person name="Atkins H.S."/>
            <person name="Hiscox T."/>
            <person name="Jost B.H."/>
            <person name="Billington S.J."/>
            <person name="Songer J.G."/>
            <person name="McClane B.A."/>
            <person name="Titball R.W."/>
            <person name="Rood J.I."/>
            <person name="Melville S.B."/>
            <person name="Paulsen I.T."/>
        </authorList>
    </citation>
    <scope>NUCLEOTIDE SEQUENCE [LARGE SCALE GENOMIC DNA]</scope>
    <source>
        <strain>ATCC 13124 / DSM 756 / JCM 1290 / NCIMB 6125 / NCTC 8237 / S 107 / Type A</strain>
    </source>
</reference>
<keyword id="KW-0255">Endonuclease</keyword>
<keyword id="KW-0378">Hydrolase</keyword>
<keyword id="KW-0479">Metal-binding</keyword>
<keyword id="KW-0540">Nuclease</keyword>
<keyword id="KW-0819">tRNA processing</keyword>
<keyword id="KW-0862">Zinc</keyword>
<evidence type="ECO:0000255" key="1">
    <source>
        <dbReference type="HAMAP-Rule" id="MF_01818"/>
    </source>
</evidence>
<gene>
    <name evidence="1" type="primary">rnz</name>
    <name type="ordered locus">CPF_1613</name>
</gene>
<sequence length="316" mass="35618">MLNVILLGTGGGMPMPNRFLSSVVMNFKGRKILLDCGEGTQVTMRVNGTGFKSIDIICISHLHGDHIYGLPGLLSTIGNSGRVEDIYIIGPKGIKEVIEGFLITLPYLPYKLNILEDASNLEFMVKKEKMELVEEDEKISSDLSIKTLELDHSSPCLGYSFNIRRGRKFNLEKALMNKVPKEVWSKLQRNEEVSLNGVKYYSYMVLGDERKGIKLSYTTDTRPTEDIPGFIKESDLYICEGTYGSEEDMHKAIKNKHMTFKEAANLAKRGQVKELLLTHFSPAINDPKEFINNAREAFENSHVGSDGEERVLNFKK</sequence>